<organism>
    <name type="scientific">Caenorhabditis elegans</name>
    <dbReference type="NCBI Taxonomy" id="6239"/>
    <lineage>
        <taxon>Eukaryota</taxon>
        <taxon>Metazoa</taxon>
        <taxon>Ecdysozoa</taxon>
        <taxon>Nematoda</taxon>
        <taxon>Chromadorea</taxon>
        <taxon>Rhabditida</taxon>
        <taxon>Rhabditina</taxon>
        <taxon>Rhabditomorpha</taxon>
        <taxon>Rhabditoidea</taxon>
        <taxon>Rhabditidae</taxon>
        <taxon>Peloderinae</taxon>
        <taxon>Caenorhabditis</taxon>
    </lineage>
</organism>
<comment type="caution">
    <text evidence="3">Could be the product of a pseudogene.</text>
</comment>
<reference key="1">
    <citation type="journal article" date="1994" name="Nature">
        <title>2.2 Mb of contiguous nucleotide sequence from chromosome III of C. elegans.</title>
        <authorList>
            <person name="Wilson R."/>
            <person name="Ainscough R."/>
            <person name="Anderson K."/>
            <person name="Baynes C."/>
            <person name="Berks M."/>
            <person name="Bonfield J."/>
            <person name="Burton J."/>
            <person name="Connell M."/>
            <person name="Copsey T."/>
            <person name="Cooper J."/>
            <person name="Coulson A."/>
            <person name="Craxton M."/>
            <person name="Dear S."/>
            <person name="Du Z."/>
            <person name="Durbin R."/>
            <person name="Favello A."/>
            <person name="Fraser A."/>
            <person name="Fulton L."/>
            <person name="Gardner A."/>
            <person name="Green P."/>
            <person name="Hawkins T."/>
            <person name="Hillier L."/>
            <person name="Jier M."/>
            <person name="Johnston L."/>
            <person name="Jones M."/>
            <person name="Kershaw J."/>
            <person name="Kirsten J."/>
            <person name="Laisster N."/>
            <person name="Latreille P."/>
            <person name="Lightning J."/>
            <person name="Lloyd C."/>
            <person name="Mortimore B."/>
            <person name="O'Callaghan M."/>
            <person name="Parsons J."/>
            <person name="Percy C."/>
            <person name="Rifken L."/>
            <person name="Roopra A."/>
            <person name="Saunders D."/>
            <person name="Shownkeen R."/>
            <person name="Sims M."/>
            <person name="Smaldon N."/>
            <person name="Smith A."/>
            <person name="Smith M."/>
            <person name="Sonnhammer E."/>
            <person name="Staden R."/>
            <person name="Sulston J."/>
            <person name="Thierry-Mieg J."/>
            <person name="Thomas K."/>
            <person name="Vaudin M."/>
            <person name="Vaughan K."/>
            <person name="Waterston R."/>
            <person name="Watson A."/>
            <person name="Weinstock L."/>
            <person name="Wilkinson-Sproat J."/>
            <person name="Wohldman P."/>
        </authorList>
    </citation>
    <scope>NUCLEOTIDE SEQUENCE [LARGE SCALE GENOMIC DNA]</scope>
    <source>
        <strain>Bristol N2</strain>
    </source>
</reference>
<reference key="2">
    <citation type="journal article" date="1998" name="Science">
        <title>Genome sequence of the nematode C. elegans: a platform for investigating biology.</title>
        <authorList>
            <consortium name="The C. elegans sequencing consortium"/>
        </authorList>
    </citation>
    <scope>NUCLEOTIDE SEQUENCE [LARGE SCALE GENOMIC DNA]</scope>
    <source>
        <strain>Bristol N2</strain>
    </source>
</reference>
<dbReference type="EMBL" id="FO080401">
    <property type="status" value="NOT_ANNOTATED_CDS"/>
    <property type="molecule type" value="Genomic_DNA"/>
</dbReference>
<dbReference type="PIR" id="S44835">
    <property type="entry name" value="S44835"/>
</dbReference>
<dbReference type="SMR" id="P34457"/>
<dbReference type="InParanoid" id="P34457"/>
<dbReference type="Proteomes" id="UP000001940">
    <property type="component" value="Chromosome III"/>
</dbReference>
<dbReference type="GO" id="GO:0003676">
    <property type="term" value="F:nucleic acid binding"/>
    <property type="evidence" value="ECO:0007669"/>
    <property type="project" value="InterPro"/>
</dbReference>
<dbReference type="GO" id="GO:0015074">
    <property type="term" value="P:DNA integration"/>
    <property type="evidence" value="ECO:0007669"/>
    <property type="project" value="InterPro"/>
</dbReference>
<dbReference type="Gene3D" id="3.30.420.10">
    <property type="entry name" value="Ribonuclease H-like superfamily/Ribonuclease H"/>
    <property type="match status" value="1"/>
</dbReference>
<dbReference type="InterPro" id="IPR001584">
    <property type="entry name" value="Integrase_cat-core"/>
</dbReference>
<dbReference type="InterPro" id="IPR012337">
    <property type="entry name" value="RNaseH-like_sf"/>
</dbReference>
<dbReference type="InterPro" id="IPR036397">
    <property type="entry name" value="RNaseH_sf"/>
</dbReference>
<dbReference type="PANTHER" id="PTHR46585:SF1">
    <property type="entry name" value="CHROMO DOMAIN-CONTAINING PROTEIN"/>
    <property type="match status" value="1"/>
</dbReference>
<dbReference type="PANTHER" id="PTHR46585">
    <property type="entry name" value="INTEGRASE CORE DOMAIN CONTAINING PROTEIN"/>
    <property type="match status" value="1"/>
</dbReference>
<dbReference type="SUPFAM" id="SSF53098">
    <property type="entry name" value="Ribonuclease H-like"/>
    <property type="match status" value="1"/>
</dbReference>
<dbReference type="PROSITE" id="PS50994">
    <property type="entry name" value="INTEGRASE"/>
    <property type="match status" value="1"/>
</dbReference>
<feature type="chain" id="PRO_0000065367" description="Putative uncharacterized transposon-derived protein F54H12.3">
    <location>
        <begin position="1"/>
        <end position="286"/>
    </location>
</feature>
<feature type="domain" description="Integrase catalytic" evidence="1">
    <location>
        <begin position="1"/>
        <end position="146"/>
    </location>
</feature>
<feature type="region of interest" description="Disordered" evidence="2">
    <location>
        <begin position="252"/>
        <end position="286"/>
    </location>
</feature>
<feature type="compositionally biased region" description="Basic residues" evidence="2">
    <location>
        <begin position="252"/>
        <end position="263"/>
    </location>
</feature>
<feature type="compositionally biased region" description="Basic and acidic residues" evidence="2">
    <location>
        <begin position="264"/>
        <end position="273"/>
    </location>
</feature>
<feature type="compositionally biased region" description="Low complexity" evidence="2">
    <location>
        <begin position="274"/>
        <end position="286"/>
    </location>
</feature>
<proteinExistence type="uncertain"/>
<sequence>MSRYKKDNDGVTFLLVCIDIYSRRLFVKTLKSKKGQEVAEALQDVFKEIGVTPMTIYSDDGKEFYNSHVKELLAKNFVNLFSPKSEIKCAIVERANRTLKTRLAKYMTQKYNRRYVDVLQQVVNGINNSVNRGIGKKPVDVERGDFSTPMPVDSVKIKFRVGDHVRIAAKRGQFDKGYEQGWTTEVYMSNSTTTPTAHAPSEESIINGKSIPQPMLAGAIFGVIFGIFCLILHVCLVRYLVKARAKHIPKVRKVKAKKGKKDKKLKESKKSDDTSTGASTGSSIAM</sequence>
<gene>
    <name type="ORF">F54H12.3</name>
</gene>
<evidence type="ECO:0000255" key="1">
    <source>
        <dbReference type="PROSITE-ProRule" id="PRU00457"/>
    </source>
</evidence>
<evidence type="ECO:0000256" key="2">
    <source>
        <dbReference type="SAM" id="MobiDB-lite"/>
    </source>
</evidence>
<evidence type="ECO:0000305" key="3"/>
<protein>
    <recommendedName>
        <fullName>Putative uncharacterized transposon-derived protein F54H12.3</fullName>
    </recommendedName>
</protein>
<accession>P34457</accession>
<keyword id="KW-1185">Reference proteome</keyword>
<name>YMD3_CAEEL</name>